<proteinExistence type="evidence at transcript level"/>
<dbReference type="EMBL" id="BC091577">
    <property type="protein sequence ID" value="AAH91577.1"/>
    <property type="molecule type" value="mRNA"/>
</dbReference>
<dbReference type="RefSeq" id="NP_001025628.1">
    <property type="nucleotide sequence ID" value="NM_001030457.1"/>
</dbReference>
<dbReference type="SMR" id="Q5BJ90"/>
<dbReference type="FunCoup" id="Q5BJ90">
    <property type="interactions" value="1895"/>
</dbReference>
<dbReference type="STRING" id="8364.ENSXETP00000051804"/>
<dbReference type="PaxDb" id="8364-ENSXETP00000047773"/>
<dbReference type="GeneID" id="595016"/>
<dbReference type="KEGG" id="xtr:595016"/>
<dbReference type="AGR" id="Xenbase:XB-GENE-945426"/>
<dbReference type="CTD" id="55759"/>
<dbReference type="Xenbase" id="XB-GENE-945426">
    <property type="gene designation" value="wdr12"/>
</dbReference>
<dbReference type="eggNOG" id="KOG0313">
    <property type="taxonomic scope" value="Eukaryota"/>
</dbReference>
<dbReference type="HOGENOM" id="CLU_000288_57_0_1"/>
<dbReference type="InParanoid" id="Q5BJ90"/>
<dbReference type="OMA" id="DHKYVEF"/>
<dbReference type="OrthoDB" id="10251381at2759"/>
<dbReference type="PhylomeDB" id="Q5BJ90"/>
<dbReference type="TreeFam" id="TF313023"/>
<dbReference type="Reactome" id="R-XTR-6791226">
    <property type="pathway name" value="Major pathway of rRNA processing in the nucleolus and cytosol"/>
</dbReference>
<dbReference type="Proteomes" id="UP000008143">
    <property type="component" value="Chromosome 9"/>
</dbReference>
<dbReference type="Bgee" id="ENSXETG00000022077">
    <property type="expression patterns" value="Expressed in neurula embryo and 14 other cell types or tissues"/>
</dbReference>
<dbReference type="ExpressionAtlas" id="Q5BJ90">
    <property type="expression patterns" value="differential"/>
</dbReference>
<dbReference type="GO" id="GO:0005730">
    <property type="term" value="C:nucleolus"/>
    <property type="evidence" value="ECO:0000250"/>
    <property type="project" value="UniProtKB"/>
</dbReference>
<dbReference type="GO" id="GO:0005654">
    <property type="term" value="C:nucleoplasm"/>
    <property type="evidence" value="ECO:0000250"/>
    <property type="project" value="UniProtKB"/>
</dbReference>
<dbReference type="GO" id="GO:0070545">
    <property type="term" value="C:PeBoW complex"/>
    <property type="evidence" value="ECO:0000250"/>
    <property type="project" value="UniProtKB"/>
</dbReference>
<dbReference type="GO" id="GO:0030687">
    <property type="term" value="C:preribosome, large subunit precursor"/>
    <property type="evidence" value="ECO:0000250"/>
    <property type="project" value="UniProtKB"/>
</dbReference>
<dbReference type="GO" id="GO:0043021">
    <property type="term" value="F:ribonucleoprotein complex binding"/>
    <property type="evidence" value="ECO:0007669"/>
    <property type="project" value="UniProtKB-UniRule"/>
</dbReference>
<dbReference type="GO" id="GO:0000466">
    <property type="term" value="P:maturation of 5.8S rRNA from tricistronic rRNA transcript (SSU-rRNA, 5.8S rRNA, LSU-rRNA)"/>
    <property type="evidence" value="ECO:0000250"/>
    <property type="project" value="UniProtKB"/>
</dbReference>
<dbReference type="GO" id="GO:0000463">
    <property type="term" value="P:maturation of LSU-rRNA from tricistronic rRNA transcript (SSU-rRNA, 5.8S rRNA, LSU-rRNA)"/>
    <property type="evidence" value="ECO:0000250"/>
    <property type="project" value="UniProtKB"/>
</dbReference>
<dbReference type="GO" id="GO:0051726">
    <property type="term" value="P:regulation of cell cycle"/>
    <property type="evidence" value="ECO:0000250"/>
    <property type="project" value="UniProtKB"/>
</dbReference>
<dbReference type="CDD" id="cd00200">
    <property type="entry name" value="WD40"/>
    <property type="match status" value="1"/>
</dbReference>
<dbReference type="FunFam" id="2.130.10.10:FF:000272">
    <property type="entry name" value="Ribosome biogenesis protein WDR12"/>
    <property type="match status" value="1"/>
</dbReference>
<dbReference type="Gene3D" id="2.130.10.10">
    <property type="entry name" value="YVTN repeat-like/Quinoprotein amine dehydrogenase"/>
    <property type="match status" value="1"/>
</dbReference>
<dbReference type="HAMAP" id="MF_03029">
    <property type="entry name" value="WDR12"/>
    <property type="match status" value="1"/>
</dbReference>
<dbReference type="InterPro" id="IPR020472">
    <property type="entry name" value="G-protein_beta_WD-40_rep"/>
</dbReference>
<dbReference type="InterPro" id="IPR012972">
    <property type="entry name" value="NLE"/>
</dbReference>
<dbReference type="InterPro" id="IPR015943">
    <property type="entry name" value="WD40/YVTN_repeat-like_dom_sf"/>
</dbReference>
<dbReference type="InterPro" id="IPR019775">
    <property type="entry name" value="WD40_repeat_CS"/>
</dbReference>
<dbReference type="InterPro" id="IPR036322">
    <property type="entry name" value="WD40_repeat_dom_sf"/>
</dbReference>
<dbReference type="InterPro" id="IPR001680">
    <property type="entry name" value="WD40_rpt"/>
</dbReference>
<dbReference type="InterPro" id="IPR028599">
    <property type="entry name" value="WDR12/Ytm1"/>
</dbReference>
<dbReference type="PANTHER" id="PTHR19855:SF11">
    <property type="entry name" value="RIBOSOME BIOGENESIS PROTEIN WDR12"/>
    <property type="match status" value="1"/>
</dbReference>
<dbReference type="PANTHER" id="PTHR19855">
    <property type="entry name" value="WD40 REPEAT PROTEIN 12, 37"/>
    <property type="match status" value="1"/>
</dbReference>
<dbReference type="Pfam" id="PF08154">
    <property type="entry name" value="NLE"/>
    <property type="match status" value="1"/>
</dbReference>
<dbReference type="Pfam" id="PF00400">
    <property type="entry name" value="WD40"/>
    <property type="match status" value="7"/>
</dbReference>
<dbReference type="PRINTS" id="PR00320">
    <property type="entry name" value="GPROTEINBRPT"/>
</dbReference>
<dbReference type="SMART" id="SM00320">
    <property type="entry name" value="WD40"/>
    <property type="match status" value="7"/>
</dbReference>
<dbReference type="SUPFAM" id="SSF50978">
    <property type="entry name" value="WD40 repeat-like"/>
    <property type="match status" value="1"/>
</dbReference>
<dbReference type="PROSITE" id="PS00678">
    <property type="entry name" value="WD_REPEATS_1"/>
    <property type="match status" value="2"/>
</dbReference>
<dbReference type="PROSITE" id="PS50082">
    <property type="entry name" value="WD_REPEATS_2"/>
    <property type="match status" value="6"/>
</dbReference>
<dbReference type="PROSITE" id="PS50294">
    <property type="entry name" value="WD_REPEATS_REGION"/>
    <property type="match status" value="1"/>
</dbReference>
<comment type="function">
    <text evidence="1">Component of the PeBoW complex, which is required for maturation of 28S and 5.8S ribosomal RNAs and formation of the 60S ribosome.</text>
</comment>
<comment type="subunit">
    <text evidence="1">Component of the PeBoW complex, composed of bop1, pes1 and wdr12. The complex is held together by bop1, which interacts with pes1 via its N-terminal domain and with wdr12 via a high-affinity interaction between the seven-bladed beta-propeller domains of the 2 proteins. The PeBoW complex associates with the 66S pre-ribosome. Interacts (via UBL domain) with mdn1 (via VWFA/MIDAS domain).</text>
</comment>
<comment type="subcellular location">
    <subcellularLocation>
        <location evidence="1">Nucleus</location>
        <location evidence="1">Nucleolus</location>
    </subcellularLocation>
    <subcellularLocation>
        <location evidence="1">Nucleus</location>
        <location evidence="1">Nucleoplasm</location>
    </subcellularLocation>
</comment>
<comment type="similarity">
    <text evidence="1">Belongs to the WD repeat WDR12/YTM1 family.</text>
</comment>
<keyword id="KW-0539">Nucleus</keyword>
<keyword id="KW-1185">Reference proteome</keyword>
<keyword id="KW-0677">Repeat</keyword>
<keyword id="KW-0690">Ribosome biogenesis</keyword>
<keyword id="KW-0698">rRNA processing</keyword>
<keyword id="KW-0853">WD repeat</keyword>
<sequence>MAQIQARFFTEEEKYKVDDVPFSIPATSEIVDLSNLINKLLETKNGDHKPVEFDFLVKSQFLRMPLIKHMEAEGISTEVVVEIEYVEKITAPQPEECMMHDDWVSSIAGTEEWILTGSYDKTCRIWSLEGKTIMTITGHTEAVKDVTWVKKDSLSCLLLSASIDQTIQLWEWNTERNKIKALHCCRGHAGSVDSIAVDASRTKFCSGSWDKMLKIWSAVPSEEEDEYEETSDRPRKKQKTEKMGLTRIPIVTLSGHSEAVSSVLWSDVDEICSASWDHNIKIWDVETGTVKSTLAGNKVFNCISYSPLSQRLASGSTDRHIRLWDPRSKDGSLVLCSLTSHTGWVTSVKWSPSHEQQLVSGSLDKLVKLWDTRSCKAPLYDLAAHSDKVLSVDWTDAGLILSGGSDNKLYSYRYTASLSDVGA</sequence>
<protein>
    <recommendedName>
        <fullName evidence="1">Ribosome biogenesis protein wdr12</fullName>
    </recommendedName>
    <alternativeName>
        <fullName evidence="1">WD repeat-containing protein 12</fullName>
    </alternativeName>
</protein>
<name>WDR12_XENTR</name>
<accession>Q5BJ90</accession>
<evidence type="ECO:0000255" key="1">
    <source>
        <dbReference type="HAMAP-Rule" id="MF_03029"/>
    </source>
</evidence>
<organism>
    <name type="scientific">Xenopus tropicalis</name>
    <name type="common">Western clawed frog</name>
    <name type="synonym">Silurana tropicalis</name>
    <dbReference type="NCBI Taxonomy" id="8364"/>
    <lineage>
        <taxon>Eukaryota</taxon>
        <taxon>Metazoa</taxon>
        <taxon>Chordata</taxon>
        <taxon>Craniata</taxon>
        <taxon>Vertebrata</taxon>
        <taxon>Euteleostomi</taxon>
        <taxon>Amphibia</taxon>
        <taxon>Batrachia</taxon>
        <taxon>Anura</taxon>
        <taxon>Pipoidea</taxon>
        <taxon>Pipidae</taxon>
        <taxon>Xenopodinae</taxon>
        <taxon>Xenopus</taxon>
        <taxon>Silurana</taxon>
    </lineage>
</organism>
<reference key="1">
    <citation type="submission" date="2005-03" db="EMBL/GenBank/DDBJ databases">
        <authorList>
            <consortium name="NIH - Xenopus Gene Collection (XGC) project"/>
        </authorList>
    </citation>
    <scope>NUCLEOTIDE SEQUENCE [LARGE SCALE MRNA]</scope>
    <source>
        <tissue>Embryo</tissue>
    </source>
</reference>
<gene>
    <name type="primary">wdr12</name>
</gene>
<feature type="chain" id="PRO_0000354082" description="Ribosome biogenesis protein wdr12">
    <location>
        <begin position="1"/>
        <end position="423"/>
    </location>
</feature>
<feature type="repeat" description="WD 1">
    <location>
        <begin position="99"/>
        <end position="137"/>
    </location>
</feature>
<feature type="repeat" description="WD 2">
    <location>
        <begin position="138"/>
        <end position="180"/>
    </location>
</feature>
<feature type="repeat" description="WD 3">
    <location>
        <begin position="187"/>
        <end position="226"/>
    </location>
</feature>
<feature type="repeat" description="WD 4">
    <location>
        <begin position="255"/>
        <end position="293"/>
    </location>
</feature>
<feature type="repeat" description="WD 5">
    <location>
        <begin position="295"/>
        <end position="334"/>
    </location>
</feature>
<feature type="repeat" description="WD 6">
    <location>
        <begin position="340"/>
        <end position="380"/>
    </location>
</feature>
<feature type="repeat" description="WD 7">
    <location>
        <begin position="384"/>
        <end position="422"/>
    </location>
</feature>
<feature type="region of interest" description="Ubiquitin-like (UBL) domain" evidence="1">
    <location>
        <begin position="4"/>
        <end position="87"/>
    </location>
</feature>